<gene>
    <name evidence="1" type="primary">frr</name>
    <name type="ordered locus">BUAPTUC7_231</name>
</gene>
<proteinExistence type="inferred from homology"/>
<sequence>MINQIDIKTRERMEACIQTFHNNINNIKTGRASPTLLHNIYIEYFGSKTPLRQVSNIIVEDSHTLKINVFDDSITSLIRKSILNSNLDLNPVLQGKDIIIPIPRLTEERRKQLIKVIRGDAESSRIQIRNIRRDANDKVKRLLKDKIISEDNEHTSQSKIQIMTNEYIKKIDCILEKKEKELMKF</sequence>
<protein>
    <recommendedName>
        <fullName evidence="1">Ribosome-recycling factor</fullName>
        <shortName evidence="1">RRF</shortName>
    </recommendedName>
    <alternativeName>
        <fullName evidence="1">Ribosome-releasing factor</fullName>
    </alternativeName>
</protein>
<keyword id="KW-0963">Cytoplasm</keyword>
<keyword id="KW-0648">Protein biosynthesis</keyword>
<comment type="function">
    <text evidence="1">Responsible for the release of ribosomes from messenger RNA at the termination of protein biosynthesis. May increase the efficiency of translation by recycling ribosomes from one round of translation to another.</text>
</comment>
<comment type="subcellular location">
    <subcellularLocation>
        <location evidence="1">Cytoplasm</location>
    </subcellularLocation>
</comment>
<comment type="similarity">
    <text evidence="1">Belongs to the RRF family.</text>
</comment>
<organism>
    <name type="scientific">Buchnera aphidicola subsp. Acyrthosiphon pisum (strain Tuc7)</name>
    <dbReference type="NCBI Taxonomy" id="561501"/>
    <lineage>
        <taxon>Bacteria</taxon>
        <taxon>Pseudomonadati</taxon>
        <taxon>Pseudomonadota</taxon>
        <taxon>Gammaproteobacteria</taxon>
        <taxon>Enterobacterales</taxon>
        <taxon>Erwiniaceae</taxon>
        <taxon>Buchnera</taxon>
    </lineage>
</organism>
<feature type="chain" id="PRO_1000194907" description="Ribosome-recycling factor">
    <location>
        <begin position="1"/>
        <end position="185"/>
    </location>
</feature>
<name>RRF_BUCAT</name>
<reference key="1">
    <citation type="journal article" date="2009" name="Science">
        <title>The dynamics and time scale of ongoing genomic erosion in symbiotic bacteria.</title>
        <authorList>
            <person name="Moran N.A."/>
            <person name="McLaughlin H.J."/>
            <person name="Sorek R."/>
        </authorList>
    </citation>
    <scope>NUCLEOTIDE SEQUENCE [LARGE SCALE GENOMIC DNA]</scope>
    <source>
        <strain>Tuc7</strain>
    </source>
</reference>
<dbReference type="EMBL" id="CP001158">
    <property type="protein sequence ID" value="ACL30050.1"/>
    <property type="molecule type" value="Genomic_DNA"/>
</dbReference>
<dbReference type="RefSeq" id="WP_012619479.1">
    <property type="nucleotide sequence ID" value="NC_011834.1"/>
</dbReference>
<dbReference type="SMR" id="B8D7D5"/>
<dbReference type="KEGG" id="bau:BUAPTUC7_231"/>
<dbReference type="HOGENOM" id="CLU_073981_2_1_6"/>
<dbReference type="GO" id="GO:0005829">
    <property type="term" value="C:cytosol"/>
    <property type="evidence" value="ECO:0007669"/>
    <property type="project" value="GOC"/>
</dbReference>
<dbReference type="GO" id="GO:0043023">
    <property type="term" value="F:ribosomal large subunit binding"/>
    <property type="evidence" value="ECO:0007669"/>
    <property type="project" value="TreeGrafter"/>
</dbReference>
<dbReference type="GO" id="GO:0002184">
    <property type="term" value="P:cytoplasmic translational termination"/>
    <property type="evidence" value="ECO:0007669"/>
    <property type="project" value="TreeGrafter"/>
</dbReference>
<dbReference type="CDD" id="cd00520">
    <property type="entry name" value="RRF"/>
    <property type="match status" value="1"/>
</dbReference>
<dbReference type="FunFam" id="1.10.132.20:FF:000001">
    <property type="entry name" value="Ribosome-recycling factor"/>
    <property type="match status" value="1"/>
</dbReference>
<dbReference type="FunFam" id="3.30.1360.40:FF:000001">
    <property type="entry name" value="Ribosome-recycling factor"/>
    <property type="match status" value="1"/>
</dbReference>
<dbReference type="Gene3D" id="3.30.1360.40">
    <property type="match status" value="1"/>
</dbReference>
<dbReference type="Gene3D" id="1.10.132.20">
    <property type="entry name" value="Ribosome-recycling factor"/>
    <property type="match status" value="1"/>
</dbReference>
<dbReference type="HAMAP" id="MF_00040">
    <property type="entry name" value="RRF"/>
    <property type="match status" value="1"/>
</dbReference>
<dbReference type="InterPro" id="IPR002661">
    <property type="entry name" value="Ribosome_recyc_fac"/>
</dbReference>
<dbReference type="InterPro" id="IPR023584">
    <property type="entry name" value="Ribosome_recyc_fac_dom"/>
</dbReference>
<dbReference type="InterPro" id="IPR036191">
    <property type="entry name" value="RRF_sf"/>
</dbReference>
<dbReference type="NCBIfam" id="TIGR00496">
    <property type="entry name" value="frr"/>
    <property type="match status" value="1"/>
</dbReference>
<dbReference type="PANTHER" id="PTHR20982:SF3">
    <property type="entry name" value="MITOCHONDRIAL RIBOSOME RECYCLING FACTOR PSEUDO 1"/>
    <property type="match status" value="1"/>
</dbReference>
<dbReference type="PANTHER" id="PTHR20982">
    <property type="entry name" value="RIBOSOME RECYCLING FACTOR"/>
    <property type="match status" value="1"/>
</dbReference>
<dbReference type="Pfam" id="PF01765">
    <property type="entry name" value="RRF"/>
    <property type="match status" value="1"/>
</dbReference>
<dbReference type="SUPFAM" id="SSF55194">
    <property type="entry name" value="Ribosome recycling factor, RRF"/>
    <property type="match status" value="1"/>
</dbReference>
<evidence type="ECO:0000255" key="1">
    <source>
        <dbReference type="HAMAP-Rule" id="MF_00040"/>
    </source>
</evidence>
<accession>B8D7D5</accession>